<protein>
    <recommendedName>
        <fullName>Catalase isozyme A</fullName>
        <shortName>CAT-A</shortName>
        <ecNumber>1.11.1.6</ecNumber>
    </recommendedName>
</protein>
<dbReference type="EC" id="1.11.1.6"/>
<dbReference type="EMBL" id="X61626">
    <property type="protein sequence ID" value="CAA43814.1"/>
    <property type="molecule type" value="mRNA"/>
</dbReference>
<dbReference type="SMR" id="P0C549"/>
<dbReference type="EnsemblPlants" id="BGIOSGA007252-TA">
    <property type="protein sequence ID" value="BGIOSGA007252-PA"/>
    <property type="gene ID" value="BGIOSGA007252"/>
</dbReference>
<dbReference type="Gramene" id="BGIOSGA007252-TA">
    <property type="protein sequence ID" value="BGIOSGA007252-PA"/>
    <property type="gene ID" value="BGIOSGA007252"/>
</dbReference>
<dbReference type="HOGENOM" id="CLU_010645_4_0_1"/>
<dbReference type="OMA" id="QERMVWH"/>
<dbReference type="ExpressionAtlas" id="P0C549">
    <property type="expression patterns" value="differential"/>
</dbReference>
<dbReference type="GO" id="GO:0009514">
    <property type="term" value="C:glyoxysome"/>
    <property type="evidence" value="ECO:0007669"/>
    <property type="project" value="UniProtKB-SubCell"/>
</dbReference>
<dbReference type="GO" id="GO:0005886">
    <property type="term" value="C:plasma membrane"/>
    <property type="evidence" value="ECO:0007669"/>
    <property type="project" value="EnsemblPlants"/>
</dbReference>
<dbReference type="GO" id="GO:0004096">
    <property type="term" value="F:catalase activity"/>
    <property type="evidence" value="ECO:0007669"/>
    <property type="project" value="UniProtKB-EC"/>
</dbReference>
<dbReference type="GO" id="GO:0020037">
    <property type="term" value="F:heme binding"/>
    <property type="evidence" value="ECO:0007669"/>
    <property type="project" value="InterPro"/>
</dbReference>
<dbReference type="GO" id="GO:0046872">
    <property type="term" value="F:metal ion binding"/>
    <property type="evidence" value="ECO:0007669"/>
    <property type="project" value="UniProtKB-KW"/>
</dbReference>
<dbReference type="GO" id="GO:0007623">
    <property type="term" value="P:circadian rhythm"/>
    <property type="evidence" value="ECO:0007669"/>
    <property type="project" value="EnsemblPlants"/>
</dbReference>
<dbReference type="GO" id="GO:0042744">
    <property type="term" value="P:hydrogen peroxide catabolic process"/>
    <property type="evidence" value="ECO:0007669"/>
    <property type="project" value="UniProtKB-KW"/>
</dbReference>
<dbReference type="GO" id="GO:0009737">
    <property type="term" value="P:response to abscisic acid"/>
    <property type="evidence" value="ECO:0007669"/>
    <property type="project" value="EnsemblPlants"/>
</dbReference>
<dbReference type="GO" id="GO:0009617">
    <property type="term" value="P:response to bacterium"/>
    <property type="evidence" value="ECO:0007669"/>
    <property type="project" value="EnsemblPlants"/>
</dbReference>
<dbReference type="GO" id="GO:0009408">
    <property type="term" value="P:response to heat"/>
    <property type="evidence" value="ECO:0007669"/>
    <property type="project" value="EnsemblPlants"/>
</dbReference>
<dbReference type="GO" id="GO:0042542">
    <property type="term" value="P:response to hydrogen peroxide"/>
    <property type="evidence" value="ECO:0007669"/>
    <property type="project" value="EnsemblPlants"/>
</dbReference>
<dbReference type="GO" id="GO:0009416">
    <property type="term" value="P:response to light stimulus"/>
    <property type="evidence" value="ECO:0007669"/>
    <property type="project" value="EnsemblPlants"/>
</dbReference>
<dbReference type="GO" id="GO:1902074">
    <property type="term" value="P:response to salt"/>
    <property type="evidence" value="ECO:0007669"/>
    <property type="project" value="EnsemblPlants"/>
</dbReference>
<dbReference type="GO" id="GO:0009414">
    <property type="term" value="P:response to water deprivation"/>
    <property type="evidence" value="ECO:0007669"/>
    <property type="project" value="EnsemblPlants"/>
</dbReference>
<dbReference type="CDD" id="cd08154">
    <property type="entry name" value="catalase_clade_1"/>
    <property type="match status" value="1"/>
</dbReference>
<dbReference type="FunFam" id="2.40.180.10:FF:000002">
    <property type="entry name" value="Catalase"/>
    <property type="match status" value="1"/>
</dbReference>
<dbReference type="Gene3D" id="2.40.180.10">
    <property type="entry name" value="Catalase core domain"/>
    <property type="match status" value="1"/>
</dbReference>
<dbReference type="InterPro" id="IPR018028">
    <property type="entry name" value="Catalase"/>
</dbReference>
<dbReference type="InterPro" id="IPR024708">
    <property type="entry name" value="Catalase_AS"/>
</dbReference>
<dbReference type="InterPro" id="IPR024711">
    <property type="entry name" value="Catalase_clade1/3"/>
</dbReference>
<dbReference type="InterPro" id="IPR011614">
    <property type="entry name" value="Catalase_core"/>
</dbReference>
<dbReference type="InterPro" id="IPR002226">
    <property type="entry name" value="Catalase_haem_BS"/>
</dbReference>
<dbReference type="InterPro" id="IPR010582">
    <property type="entry name" value="Catalase_immune_responsive"/>
</dbReference>
<dbReference type="InterPro" id="IPR020835">
    <property type="entry name" value="Catalase_sf"/>
</dbReference>
<dbReference type="PANTHER" id="PTHR11465">
    <property type="entry name" value="CATALASE"/>
    <property type="match status" value="1"/>
</dbReference>
<dbReference type="PANTHER" id="PTHR11465:SF45">
    <property type="entry name" value="CATALASE ISOZYME A"/>
    <property type="match status" value="1"/>
</dbReference>
<dbReference type="Pfam" id="PF00199">
    <property type="entry name" value="Catalase"/>
    <property type="match status" value="1"/>
</dbReference>
<dbReference type="Pfam" id="PF06628">
    <property type="entry name" value="Catalase-rel"/>
    <property type="match status" value="1"/>
</dbReference>
<dbReference type="PIRSF" id="PIRSF038928">
    <property type="entry name" value="Catalase_clade1-3"/>
    <property type="match status" value="1"/>
</dbReference>
<dbReference type="PRINTS" id="PR00067">
    <property type="entry name" value="CATALASE"/>
</dbReference>
<dbReference type="SMART" id="SM01060">
    <property type="entry name" value="Catalase"/>
    <property type="match status" value="1"/>
</dbReference>
<dbReference type="SUPFAM" id="SSF56634">
    <property type="entry name" value="Heme-dependent catalase-like"/>
    <property type="match status" value="1"/>
</dbReference>
<dbReference type="PROSITE" id="PS00437">
    <property type="entry name" value="CATALASE_1"/>
    <property type="match status" value="1"/>
</dbReference>
<dbReference type="PROSITE" id="PS00438">
    <property type="entry name" value="CATALASE_2"/>
    <property type="match status" value="1"/>
</dbReference>
<dbReference type="PROSITE" id="PS51402">
    <property type="entry name" value="CATALASE_3"/>
    <property type="match status" value="1"/>
</dbReference>
<organism>
    <name type="scientific">Oryza sativa subsp. indica</name>
    <name type="common">Rice</name>
    <dbReference type="NCBI Taxonomy" id="39946"/>
    <lineage>
        <taxon>Eukaryota</taxon>
        <taxon>Viridiplantae</taxon>
        <taxon>Streptophyta</taxon>
        <taxon>Embryophyta</taxon>
        <taxon>Tracheophyta</taxon>
        <taxon>Spermatophyta</taxon>
        <taxon>Magnoliopsida</taxon>
        <taxon>Liliopsida</taxon>
        <taxon>Poales</taxon>
        <taxon>Poaceae</taxon>
        <taxon>BOP clade</taxon>
        <taxon>Oryzoideae</taxon>
        <taxon>Oryzeae</taxon>
        <taxon>Oryzinae</taxon>
        <taxon>Oryza</taxon>
        <taxon>Oryza sativa</taxon>
    </lineage>
</organism>
<keyword id="KW-0330">Glyoxysome</keyword>
<keyword id="KW-0349">Heme</keyword>
<keyword id="KW-0376">Hydrogen peroxide</keyword>
<keyword id="KW-0408">Iron</keyword>
<keyword id="KW-0479">Metal-binding</keyword>
<keyword id="KW-0560">Oxidoreductase</keyword>
<keyword id="KW-0575">Peroxidase</keyword>
<keyword id="KW-0576">Peroxisome</keyword>
<feature type="chain" id="PRO_0000293083" description="Catalase isozyme A">
    <location>
        <begin position="1"/>
        <end position="492"/>
    </location>
</feature>
<feature type="region of interest" description="Disordered" evidence="3">
    <location>
        <begin position="1"/>
        <end position="23"/>
    </location>
</feature>
<feature type="compositionally biased region" description="Polar residues" evidence="3">
    <location>
        <begin position="8"/>
        <end position="21"/>
    </location>
</feature>
<feature type="active site" evidence="2">
    <location>
        <position position="65"/>
    </location>
</feature>
<feature type="active site" evidence="2">
    <location>
        <position position="138"/>
    </location>
</feature>
<feature type="binding site" description="axial binding residue" evidence="1">
    <location>
        <position position="348"/>
    </location>
    <ligand>
        <name>heme</name>
        <dbReference type="ChEBI" id="CHEBI:30413"/>
    </ligand>
    <ligandPart>
        <name>Fe</name>
        <dbReference type="ChEBI" id="CHEBI:18248"/>
    </ligandPart>
</feature>
<feature type="sequence conflict" description="In Ref. 1; CAA43814." evidence="4" ref="1">
    <original>P</original>
    <variation>Q</variation>
    <location>
        <position position="113"/>
    </location>
</feature>
<feature type="sequence conflict" description="In Ref. 1; CAA43814." evidence="4" ref="1">
    <original>RRFAGEL</original>
    <variation>AVRRRV</variation>
    <location>
        <begin position="448"/>
        <end position="454"/>
    </location>
</feature>
<proteinExistence type="evidence at transcript level"/>
<sequence length="492" mass="56698">MDPCKFRPSSSFDTKTTTTNAGAPVWNDNEALTVGPRGPILLEDYHLIEKVAHFARERIPERVVHARGASAKGFFECTHDVTDITCADFLRSPGAQTPVIVRFSTVIHERGSPETIRDPRGFAVKFYTREGNWDLLGNNFPVFFIRDGIKFPDVIHAFKPNPRSHVQEYWRVFDFLSHHPESLHTFFFLFDDVGIPTDYRHMDGFGVNTYTFVTRDAKARYVKFHWKPTCGVSCLMDDEATLVGGKNHSHATQDLYDSIAAGNFPEWKLFVQVIDPEEEERFDFDPLDDTKTWPEDEVPLRPVGRLVLNRNVDNFFNENEQLAFGPGLVVPGIYYSDDKMLQCRVFAYADTQRYRLGPNYLMLPVNAPKCAHHNNHYDGAMNFMHRDEEVDYYPSRHAPLRHAPPTPITPRPVVGRRQKATIHKQNDFKQPGERYRSWAPDRQERFIRRFAGELAHPKVSPELRAIWVNYLSQCDESLGVKIANRLNVKPSM</sequence>
<reference key="1">
    <citation type="journal article" date="1992" name="Plant Mol. Biol.">
        <title>Nucleotide and derived amino acid sequence of a catalase cDNA isolated from rice immature seeds.</title>
        <authorList>
            <person name="Mori H."/>
            <person name="Higo K."/>
            <person name="Higo H."/>
            <person name="Minobe Y."/>
            <person name="Matsui H."/>
            <person name="Chiba S."/>
        </authorList>
    </citation>
    <scope>NUCLEOTIDE SEQUENCE [MRNA]</scope>
    <source>
        <strain>cv. Habataki</strain>
        <tissue>Immature seed</tissue>
    </source>
</reference>
<comment type="function">
    <text>Occurs in almost all aerobically respiring organisms and serves to protect cells from the toxic effects of hydrogen peroxide.</text>
</comment>
<comment type="catalytic activity">
    <reaction evidence="2">
        <text>2 H2O2 = O2 + 2 H2O</text>
        <dbReference type="Rhea" id="RHEA:20309"/>
        <dbReference type="ChEBI" id="CHEBI:15377"/>
        <dbReference type="ChEBI" id="CHEBI:15379"/>
        <dbReference type="ChEBI" id="CHEBI:16240"/>
        <dbReference type="EC" id="1.11.1.6"/>
    </reaction>
</comment>
<comment type="cofactor">
    <cofactor>
        <name>heme</name>
        <dbReference type="ChEBI" id="CHEBI:30413"/>
    </cofactor>
</comment>
<comment type="subunit">
    <text evidence="1">Homotetramer.</text>
</comment>
<comment type="subcellular location">
    <subcellularLocation>
        <location evidence="1">Peroxisome</location>
    </subcellularLocation>
    <subcellularLocation>
        <location evidence="1">Glyoxysome</location>
    </subcellularLocation>
</comment>
<comment type="similarity">
    <text evidence="4">Belongs to the catalase family.</text>
</comment>
<accession>P0C549</accession>
<accession>P29611</accession>
<accession>Q6Z7B2</accession>
<name>CATA1_ORYSI</name>
<evidence type="ECO:0000250" key="1"/>
<evidence type="ECO:0000255" key="2">
    <source>
        <dbReference type="PROSITE-ProRule" id="PRU10013"/>
    </source>
</evidence>
<evidence type="ECO:0000256" key="3">
    <source>
        <dbReference type="SAM" id="MobiDB-lite"/>
    </source>
</evidence>
<evidence type="ECO:0000305" key="4"/>